<organism>
    <name type="scientific">Xenopus laevis</name>
    <name type="common">African clawed frog</name>
    <dbReference type="NCBI Taxonomy" id="8355"/>
    <lineage>
        <taxon>Eukaryota</taxon>
        <taxon>Metazoa</taxon>
        <taxon>Chordata</taxon>
        <taxon>Craniata</taxon>
        <taxon>Vertebrata</taxon>
        <taxon>Euteleostomi</taxon>
        <taxon>Amphibia</taxon>
        <taxon>Batrachia</taxon>
        <taxon>Anura</taxon>
        <taxon>Pipoidea</taxon>
        <taxon>Pipidae</taxon>
        <taxon>Xenopodinae</taxon>
        <taxon>Xenopus</taxon>
        <taxon>Xenopus</taxon>
    </lineage>
</organism>
<gene>
    <name evidence="1" type="primary">sesn1</name>
    <name evidence="4" type="synonym">pa26</name>
</gene>
<dbReference type="EC" id="1.11.1.-" evidence="1"/>
<dbReference type="EMBL" id="AB048259">
    <property type="protein sequence ID" value="BAB33008.1"/>
    <property type="molecule type" value="mRNA"/>
</dbReference>
<dbReference type="EMBL" id="BC056061">
    <property type="protein sequence ID" value="AAH56061.1"/>
    <property type="molecule type" value="mRNA"/>
</dbReference>
<dbReference type="RefSeq" id="NP_001079869.1">
    <property type="nucleotide sequence ID" value="NM_001086400.1"/>
</dbReference>
<dbReference type="SMR" id="P58003"/>
<dbReference type="DNASU" id="379559"/>
<dbReference type="GeneID" id="379559"/>
<dbReference type="KEGG" id="xla:379559"/>
<dbReference type="AGR" id="Xenbase:XB-GENE-866080"/>
<dbReference type="CTD" id="379559"/>
<dbReference type="Xenbase" id="XB-GENE-866080">
    <property type="gene designation" value="sesn1.L"/>
</dbReference>
<dbReference type="OMA" id="CDQVTQV"/>
<dbReference type="OrthoDB" id="337464at2759"/>
<dbReference type="Proteomes" id="UP000186698">
    <property type="component" value="Chromosome 5L"/>
</dbReference>
<dbReference type="Bgee" id="379559">
    <property type="expression patterns" value="Expressed in spleen and 19 other cell types or tissues"/>
</dbReference>
<dbReference type="GO" id="GO:0005737">
    <property type="term" value="C:cytoplasm"/>
    <property type="evidence" value="ECO:0000250"/>
    <property type="project" value="UniProtKB"/>
</dbReference>
<dbReference type="GO" id="GO:0005634">
    <property type="term" value="C:nucleus"/>
    <property type="evidence" value="ECO:0000250"/>
    <property type="project" value="UniProtKB"/>
</dbReference>
<dbReference type="GO" id="GO:0070728">
    <property type="term" value="F:L-leucine binding"/>
    <property type="evidence" value="ECO:0000250"/>
    <property type="project" value="UniProtKB"/>
</dbReference>
<dbReference type="GO" id="GO:0016684">
    <property type="term" value="F:oxidoreductase activity, acting on peroxide as acceptor"/>
    <property type="evidence" value="ECO:0000318"/>
    <property type="project" value="GO_Central"/>
</dbReference>
<dbReference type="GO" id="GO:0071233">
    <property type="term" value="P:cellular response to L-leucine"/>
    <property type="evidence" value="ECO:0000318"/>
    <property type="project" value="GO_Central"/>
</dbReference>
<dbReference type="GO" id="GO:1990253">
    <property type="term" value="P:cellular response to leucine starvation"/>
    <property type="evidence" value="ECO:0000318"/>
    <property type="project" value="GO_Central"/>
</dbReference>
<dbReference type="GO" id="GO:1904262">
    <property type="term" value="P:negative regulation of TORC1 signaling"/>
    <property type="evidence" value="ECO:0000250"/>
    <property type="project" value="UniProtKB"/>
</dbReference>
<dbReference type="GO" id="GO:0016239">
    <property type="term" value="P:positive regulation of macroautophagy"/>
    <property type="evidence" value="ECO:0000318"/>
    <property type="project" value="GO_Central"/>
</dbReference>
<dbReference type="GO" id="GO:1901031">
    <property type="term" value="P:regulation of response to reactive oxygen species"/>
    <property type="evidence" value="ECO:0007669"/>
    <property type="project" value="InterPro"/>
</dbReference>
<dbReference type="FunFam" id="1.20.1290.10:FF:000001">
    <property type="entry name" value="Sestrin 1"/>
    <property type="match status" value="1"/>
</dbReference>
<dbReference type="Gene3D" id="1.20.1290.10">
    <property type="entry name" value="AhpD-like"/>
    <property type="match status" value="1"/>
</dbReference>
<dbReference type="InterPro" id="IPR029032">
    <property type="entry name" value="AhpD-like"/>
</dbReference>
<dbReference type="InterPro" id="IPR006730">
    <property type="entry name" value="Sestrin"/>
</dbReference>
<dbReference type="PANTHER" id="PTHR12474">
    <property type="entry name" value="P53 REGULATED PA26 NUCLEAR PROTEIN SESTRIN"/>
    <property type="match status" value="1"/>
</dbReference>
<dbReference type="PANTHER" id="PTHR12474:SF3">
    <property type="entry name" value="SESTRIN-1"/>
    <property type="match status" value="1"/>
</dbReference>
<dbReference type="Pfam" id="PF04636">
    <property type="entry name" value="PA26"/>
    <property type="match status" value="1"/>
</dbReference>
<dbReference type="SUPFAM" id="SSF69118">
    <property type="entry name" value="AhpD-like"/>
    <property type="match status" value="1"/>
</dbReference>
<comment type="function">
    <text evidence="1">May function as an intracellular leucine sensor that negatively regulates the TORC1 signaling pathway through the GATOR complex. In absence of leucine, binds the GATOR subcomplex GATOR2 and prevents TORC1 signaling. Binding of leucine to SESN2 disrupts its interaction with GATOR2 thereby activating the TORC1 signaling pathway. This stress-inducible metabolic regulator may also play a role in protection against oxidative and genotoxic stresses. May prevent the accumulation of reactive oxygen species (ROS) through the alkylhydroperoxide reductase activity born by the N-terminal domain of the protein.</text>
</comment>
<comment type="catalytic activity">
    <reaction evidence="1">
        <text>a hydroperoxide + L-cysteinyl-[protein] = S-hydroxy-L-cysteinyl-[protein] + an alcohol</text>
        <dbReference type="Rhea" id="RHEA:67124"/>
        <dbReference type="Rhea" id="RHEA-COMP:10131"/>
        <dbReference type="Rhea" id="RHEA-COMP:17193"/>
        <dbReference type="ChEBI" id="CHEBI:29950"/>
        <dbReference type="ChEBI" id="CHEBI:30879"/>
        <dbReference type="ChEBI" id="CHEBI:35924"/>
        <dbReference type="ChEBI" id="CHEBI:61973"/>
    </reaction>
    <physiologicalReaction direction="left-to-right" evidence="1">
        <dbReference type="Rhea" id="RHEA:67125"/>
    </physiologicalReaction>
</comment>
<comment type="subcellular location">
    <subcellularLocation>
        <location evidence="2">Nucleus</location>
    </subcellularLocation>
    <subcellularLocation>
        <location evidence="2">Cytoplasm</location>
    </subcellularLocation>
</comment>
<comment type="developmental stage">
    <text>At zygotic stage; specifically expressed in the notochord. Maternal transcripts are detected at cleavage stages and reduced during gastrulation.</text>
</comment>
<comment type="domain">
    <text evidence="1">The N-terminal domain may have an alkylhydroperoxide reductase activity.</text>
</comment>
<comment type="domain">
    <text evidence="1">The C-terminal domain mediates interaction with GATOR2 through which it regulates TORC1 signaling.</text>
</comment>
<comment type="similarity">
    <text evidence="5">Belongs to the sestrin family.</text>
</comment>
<feature type="chain" id="PRO_0000221180" description="Sestrin-1">
    <location>
        <begin position="1"/>
        <end position="481"/>
    </location>
</feature>
<feature type="region of interest" description="N-terminal domain; may mediate the alkylhydroperoxide reductase activity" evidence="1">
    <location>
        <begin position="63"/>
        <end position="244"/>
    </location>
</feature>
<feature type="region of interest" description="Disordered" evidence="3">
    <location>
        <begin position="295"/>
        <end position="316"/>
    </location>
</feature>
<feature type="region of interest" description="C-terminal domain; mediates TORC1 regulation" evidence="1">
    <location>
        <begin position="310"/>
        <end position="481"/>
    </location>
</feature>
<feature type="active site" description="Cysteine sulfenic acid (-SOH) intermediate" evidence="1">
    <location>
        <position position="122"/>
    </location>
</feature>
<feature type="binding site" evidence="1">
    <location>
        <begin position="375"/>
        <end position="378"/>
    </location>
    <ligand>
        <name>L-leucine</name>
        <dbReference type="ChEBI" id="CHEBI:57427"/>
    </ligand>
</feature>
<feature type="binding site" evidence="1">
    <location>
        <position position="387"/>
    </location>
    <ligand>
        <name>L-leucine</name>
        <dbReference type="ChEBI" id="CHEBI:57427"/>
    </ligand>
</feature>
<feature type="binding site" evidence="1">
    <location>
        <position position="452"/>
    </location>
    <ligand>
        <name>L-leucine</name>
        <dbReference type="ChEBI" id="CHEBI:57427"/>
    </ligand>
</feature>
<proteinExistence type="evidence at transcript level"/>
<reference key="1">
    <citation type="journal article" date="2001" name="Mech. Dev.">
        <title>A Xenopus homolog of a human p53-activated gene, PA26, is specifically expressed in the notochord.</title>
        <authorList>
            <person name="Hikasa H."/>
            <person name="Taira M."/>
        </authorList>
    </citation>
    <scope>NUCLEOTIDE SEQUENCE [MRNA]</scope>
</reference>
<reference key="2">
    <citation type="submission" date="2003-08" db="EMBL/GenBank/DDBJ databases">
        <authorList>
            <consortium name="NIH - Xenopus Gene Collection (XGC) project"/>
        </authorList>
    </citation>
    <scope>NUCLEOTIDE SEQUENCE [LARGE SCALE MRNA]</scope>
    <source>
        <tissue>Spleen</tissue>
    </source>
</reference>
<name>SESN1_XENLA</name>
<accession>P58003</accession>
<accession>Q5D077</accession>
<sequence>MRLSPRAALSSPEIICSRCSQSCNNKELGIRIPRPLGQGPSRFVPEEEILQLASEDANMHSVFADAFTDLGRLDNITLVMVFHPQYLESFLKTQHYLLQMDGPLSPCYQHYIGIMAASRHQCSYLVNLHVNDFIHHGGDQKWLNGLENAPQKLRNLGELNKMLAHRPWLITKEHIKQLLKAGEHSWSLAELIHAIVLLAHYHSLASFTFGCGINPEIHSNGGHTFRPPSVSNYCICDITNGNHGTEGHLPVGIVMPTDSTCEVEALMVKMKQLQEGRDEEEASQEEMATRFEREKTESMVFSTEDEDPPPDIDVSRHFEDTSYGYKDFSRRGMHVPTFRVQDYSWEDHGYSLVNRLYPDVGQLLDEKFHIAYNLTYNTMAMHKDVDTSTLRRAVWNYVHCMFGIRYDDYDYGEINQLLDRSFKVYIKNVVCSPEKTSKRMYDGFWRQFKHSEKVHVNLLLMEARMQGELLYALRAITRYMT</sequence>
<protein>
    <recommendedName>
        <fullName evidence="5">Sestrin-1</fullName>
        <ecNumber evidence="1">1.11.1.-</ecNumber>
    </recommendedName>
    <alternativeName>
        <fullName evidence="4">XPA26</fullName>
    </alternativeName>
    <alternativeName>
        <fullName evidence="4">p53-regulated protein PA26</fullName>
    </alternativeName>
</protein>
<keyword id="KW-0963">Cytoplasm</keyword>
<keyword id="KW-0539">Nucleus</keyword>
<keyword id="KW-0560">Oxidoreductase</keyword>
<keyword id="KW-1185">Reference proteome</keyword>
<evidence type="ECO:0000250" key="1">
    <source>
        <dbReference type="UniProtKB" id="P58004"/>
    </source>
</evidence>
<evidence type="ECO:0000250" key="2">
    <source>
        <dbReference type="UniProtKB" id="Q9Y6P5"/>
    </source>
</evidence>
<evidence type="ECO:0000256" key="3">
    <source>
        <dbReference type="SAM" id="MobiDB-lite"/>
    </source>
</evidence>
<evidence type="ECO:0000303" key="4">
    <source>
    </source>
</evidence>
<evidence type="ECO:0000305" key="5"/>